<proteinExistence type="inferred from homology"/>
<keyword id="KW-0028">Amino-acid biosynthesis</keyword>
<keyword id="KW-0055">Arginine biosynthesis</keyword>
<keyword id="KW-0963">Cytoplasm</keyword>
<keyword id="KW-0808">Transferase</keyword>
<reference key="1">
    <citation type="journal article" date="2009" name="PLoS ONE">
        <title>Genome degradation in Brucella ovis corresponds with narrowing of its host range and tissue tropism.</title>
        <authorList>
            <person name="Tsolis R.M."/>
            <person name="Seshadri R."/>
            <person name="Santos R.L."/>
            <person name="Sangari F.J."/>
            <person name="Lobo J.M."/>
            <person name="de Jong M.F."/>
            <person name="Ren Q."/>
            <person name="Myers G."/>
            <person name="Brinkac L.M."/>
            <person name="Nelson W.C."/>
            <person name="Deboy R.T."/>
            <person name="Angiuoli S."/>
            <person name="Khouri H."/>
            <person name="Dimitrov G."/>
            <person name="Robinson J.R."/>
            <person name="Mulligan S."/>
            <person name="Walker R.L."/>
            <person name="Elzer P.E."/>
            <person name="Hassan K.A."/>
            <person name="Paulsen I.T."/>
        </authorList>
    </citation>
    <scope>NUCLEOTIDE SEQUENCE [LARGE SCALE GENOMIC DNA]</scope>
    <source>
        <strain>ATCC 25840 / 63/290 / NCTC 10512</strain>
    </source>
</reference>
<gene>
    <name evidence="2" type="primary">argF</name>
    <name type="ordered locus">BOV_0315</name>
</gene>
<accession>A5VNP2</accession>
<organism>
    <name type="scientific">Brucella ovis (strain ATCC 25840 / 63/290 / NCTC 10512)</name>
    <dbReference type="NCBI Taxonomy" id="444178"/>
    <lineage>
        <taxon>Bacteria</taxon>
        <taxon>Pseudomonadati</taxon>
        <taxon>Pseudomonadota</taxon>
        <taxon>Alphaproteobacteria</taxon>
        <taxon>Hyphomicrobiales</taxon>
        <taxon>Brucellaceae</taxon>
        <taxon>Brucella/Ochrobactrum group</taxon>
        <taxon>Brucella</taxon>
    </lineage>
</organism>
<comment type="function">
    <text evidence="1">Reversibly catalyzes the transfer of the carbamoyl group from carbamoyl phosphate (CP) to the N(epsilon) atom of ornithine (ORN) to produce L-citrulline.</text>
</comment>
<comment type="catalytic activity">
    <reaction evidence="2">
        <text>carbamoyl phosphate + L-ornithine = L-citrulline + phosphate + H(+)</text>
        <dbReference type="Rhea" id="RHEA:19513"/>
        <dbReference type="ChEBI" id="CHEBI:15378"/>
        <dbReference type="ChEBI" id="CHEBI:43474"/>
        <dbReference type="ChEBI" id="CHEBI:46911"/>
        <dbReference type="ChEBI" id="CHEBI:57743"/>
        <dbReference type="ChEBI" id="CHEBI:58228"/>
        <dbReference type="EC" id="2.1.3.3"/>
    </reaction>
</comment>
<comment type="pathway">
    <text evidence="2">Amino-acid biosynthesis; L-arginine biosynthesis; L-arginine from L-ornithine and carbamoyl phosphate: step 1/3.</text>
</comment>
<comment type="subcellular location">
    <subcellularLocation>
        <location evidence="2">Cytoplasm</location>
    </subcellularLocation>
</comment>
<comment type="similarity">
    <text evidence="2">Belongs to the aspartate/ornithine carbamoyltransferase superfamily. OTCase family.</text>
</comment>
<feature type="chain" id="PRO_1000065078" description="Ornithine carbamoyltransferase">
    <location>
        <begin position="1"/>
        <end position="312"/>
    </location>
</feature>
<feature type="binding site" evidence="2">
    <location>
        <begin position="57"/>
        <end position="60"/>
    </location>
    <ligand>
        <name>carbamoyl phosphate</name>
        <dbReference type="ChEBI" id="CHEBI:58228"/>
    </ligand>
</feature>
<feature type="binding site" evidence="2">
    <location>
        <position position="84"/>
    </location>
    <ligand>
        <name>carbamoyl phosphate</name>
        <dbReference type="ChEBI" id="CHEBI:58228"/>
    </ligand>
</feature>
<feature type="binding site" evidence="2">
    <location>
        <position position="108"/>
    </location>
    <ligand>
        <name>carbamoyl phosphate</name>
        <dbReference type="ChEBI" id="CHEBI:58228"/>
    </ligand>
</feature>
<feature type="binding site" evidence="2">
    <location>
        <begin position="135"/>
        <end position="138"/>
    </location>
    <ligand>
        <name>carbamoyl phosphate</name>
        <dbReference type="ChEBI" id="CHEBI:58228"/>
    </ligand>
</feature>
<feature type="binding site" evidence="2">
    <location>
        <position position="166"/>
    </location>
    <ligand>
        <name>L-ornithine</name>
        <dbReference type="ChEBI" id="CHEBI:46911"/>
    </ligand>
</feature>
<feature type="binding site" evidence="2">
    <location>
        <position position="226"/>
    </location>
    <ligand>
        <name>L-ornithine</name>
        <dbReference type="ChEBI" id="CHEBI:46911"/>
    </ligand>
</feature>
<feature type="binding site" evidence="2">
    <location>
        <begin position="230"/>
        <end position="231"/>
    </location>
    <ligand>
        <name>L-ornithine</name>
        <dbReference type="ChEBI" id="CHEBI:46911"/>
    </ligand>
</feature>
<feature type="binding site" evidence="2">
    <location>
        <begin position="265"/>
        <end position="266"/>
    </location>
    <ligand>
        <name>carbamoyl phosphate</name>
        <dbReference type="ChEBI" id="CHEBI:58228"/>
    </ligand>
</feature>
<feature type="binding site" evidence="2">
    <location>
        <position position="293"/>
    </location>
    <ligand>
        <name>carbamoyl phosphate</name>
        <dbReference type="ChEBI" id="CHEBI:58228"/>
    </ligand>
</feature>
<evidence type="ECO:0000250" key="1"/>
<evidence type="ECO:0000255" key="2">
    <source>
        <dbReference type="HAMAP-Rule" id="MF_01109"/>
    </source>
</evidence>
<sequence length="312" mass="34207">MANDNGIKHFIDLSTVPATELRAILEDAKARKARLKAGEVERPYAGKVLAMIFEKPSTRTRVSFDVGMRQLGGETIMLTGSEMQLGRSETIADTAKVLSRYVDAIMIRTTAHERMLELAEYATVPVINALTDDTHPCQIMADVLTYEEHRGPIKGKTFAWMGDGNNVLHSLVEAAARFDFNVNIATPKGSEPKSQYIDWARANGAGIMSTTDPEKAASGADCIVTDTWVSMGQEDHARGHNVFIPYQVNANLMAKADPKALFMHCLPAHRGEEVTDEVIDGPQAVVFDEAENRLHAQKAILAWCLQDRGLGA</sequence>
<dbReference type="EC" id="2.1.3.3" evidence="2"/>
<dbReference type="EMBL" id="CP000708">
    <property type="protein sequence ID" value="ABQ60576.1"/>
    <property type="molecule type" value="Genomic_DNA"/>
</dbReference>
<dbReference type="RefSeq" id="WP_005978137.1">
    <property type="nucleotide sequence ID" value="NC_009505.1"/>
</dbReference>
<dbReference type="SMR" id="A5VNP2"/>
<dbReference type="GeneID" id="45123805"/>
<dbReference type="KEGG" id="bov:BOV_0315"/>
<dbReference type="HOGENOM" id="CLU_043846_3_2_5"/>
<dbReference type="PhylomeDB" id="A5VNP2"/>
<dbReference type="UniPathway" id="UPA00068">
    <property type="reaction ID" value="UER00112"/>
</dbReference>
<dbReference type="Proteomes" id="UP000006383">
    <property type="component" value="Chromosome I"/>
</dbReference>
<dbReference type="GO" id="GO:0005737">
    <property type="term" value="C:cytoplasm"/>
    <property type="evidence" value="ECO:0007669"/>
    <property type="project" value="UniProtKB-SubCell"/>
</dbReference>
<dbReference type="GO" id="GO:0016597">
    <property type="term" value="F:amino acid binding"/>
    <property type="evidence" value="ECO:0007669"/>
    <property type="project" value="InterPro"/>
</dbReference>
<dbReference type="GO" id="GO:0004585">
    <property type="term" value="F:ornithine carbamoyltransferase activity"/>
    <property type="evidence" value="ECO:0007669"/>
    <property type="project" value="UniProtKB-UniRule"/>
</dbReference>
<dbReference type="GO" id="GO:0042450">
    <property type="term" value="P:arginine biosynthetic process via ornithine"/>
    <property type="evidence" value="ECO:0007669"/>
    <property type="project" value="TreeGrafter"/>
</dbReference>
<dbReference type="GO" id="GO:0019240">
    <property type="term" value="P:citrulline biosynthetic process"/>
    <property type="evidence" value="ECO:0007669"/>
    <property type="project" value="TreeGrafter"/>
</dbReference>
<dbReference type="GO" id="GO:0006526">
    <property type="term" value="P:L-arginine biosynthetic process"/>
    <property type="evidence" value="ECO:0007669"/>
    <property type="project" value="UniProtKB-UniRule"/>
</dbReference>
<dbReference type="FunFam" id="3.40.50.1370:FF:000008">
    <property type="entry name" value="Ornithine carbamoyltransferase"/>
    <property type="match status" value="1"/>
</dbReference>
<dbReference type="FunFam" id="3.40.50.1370:FF:000016">
    <property type="entry name" value="Ornithine carbamoyltransferase"/>
    <property type="match status" value="1"/>
</dbReference>
<dbReference type="Gene3D" id="3.40.50.1370">
    <property type="entry name" value="Aspartate/ornithine carbamoyltransferase"/>
    <property type="match status" value="2"/>
</dbReference>
<dbReference type="HAMAP" id="MF_01109">
    <property type="entry name" value="OTCase"/>
    <property type="match status" value="1"/>
</dbReference>
<dbReference type="InterPro" id="IPR006132">
    <property type="entry name" value="Asp/Orn_carbamoyltranf_P-bd"/>
</dbReference>
<dbReference type="InterPro" id="IPR006130">
    <property type="entry name" value="Asp/Orn_carbamoylTrfase"/>
</dbReference>
<dbReference type="InterPro" id="IPR036901">
    <property type="entry name" value="Asp/Orn_carbamoylTrfase_sf"/>
</dbReference>
<dbReference type="InterPro" id="IPR006131">
    <property type="entry name" value="Asp_carbamoyltransf_Asp/Orn-bd"/>
</dbReference>
<dbReference type="InterPro" id="IPR002292">
    <property type="entry name" value="Orn/put_carbamltrans"/>
</dbReference>
<dbReference type="InterPro" id="IPR024904">
    <property type="entry name" value="OTCase_ArgI"/>
</dbReference>
<dbReference type="NCBIfam" id="TIGR00658">
    <property type="entry name" value="orni_carb_tr"/>
    <property type="match status" value="1"/>
</dbReference>
<dbReference type="NCBIfam" id="NF001986">
    <property type="entry name" value="PRK00779.1"/>
    <property type="match status" value="1"/>
</dbReference>
<dbReference type="PANTHER" id="PTHR45753">
    <property type="entry name" value="ORNITHINE CARBAMOYLTRANSFERASE, MITOCHONDRIAL"/>
    <property type="match status" value="1"/>
</dbReference>
<dbReference type="PANTHER" id="PTHR45753:SF3">
    <property type="entry name" value="ORNITHINE TRANSCARBAMYLASE, MITOCHONDRIAL"/>
    <property type="match status" value="1"/>
</dbReference>
<dbReference type="Pfam" id="PF00185">
    <property type="entry name" value="OTCace"/>
    <property type="match status" value="1"/>
</dbReference>
<dbReference type="Pfam" id="PF02729">
    <property type="entry name" value="OTCace_N"/>
    <property type="match status" value="1"/>
</dbReference>
<dbReference type="PRINTS" id="PR00100">
    <property type="entry name" value="AOTCASE"/>
</dbReference>
<dbReference type="PRINTS" id="PR00102">
    <property type="entry name" value="OTCASE"/>
</dbReference>
<dbReference type="SUPFAM" id="SSF53671">
    <property type="entry name" value="Aspartate/ornithine carbamoyltransferase"/>
    <property type="match status" value="1"/>
</dbReference>
<dbReference type="PROSITE" id="PS00097">
    <property type="entry name" value="CARBAMOYLTRANSFERASE"/>
    <property type="match status" value="1"/>
</dbReference>
<name>OTC_BRUO2</name>
<protein>
    <recommendedName>
        <fullName evidence="2">Ornithine carbamoyltransferase</fullName>
        <shortName evidence="2">OTCase</shortName>
        <ecNumber evidence="2">2.1.3.3</ecNumber>
    </recommendedName>
</protein>